<sequence>MADLNSPIQYLKDDFKDQTSIGSLEYDENSDTMIPSFAAGLENYEPIPSPTTSSSLYSHLTHNMEKIAEEDDINFLHDTREFTSLVPDEADNKPEDDEESGGAKPKKKKHLFPKLSSHKSK</sequence>
<evidence type="ECO:0000250" key="1">
    <source>
        <dbReference type="UniProtKB" id="Q65201"/>
    </source>
</evidence>
<evidence type="ECO:0000256" key="2">
    <source>
        <dbReference type="SAM" id="MobiDB-lite"/>
    </source>
</evidence>
<evidence type="ECO:0000305" key="3"/>
<organism>
    <name type="scientific">African swine fever virus (isolate Pig/Kenya/KEN-50/1950)</name>
    <name type="common">ASFV</name>
    <dbReference type="NCBI Taxonomy" id="561445"/>
    <lineage>
        <taxon>Viruses</taxon>
        <taxon>Varidnaviria</taxon>
        <taxon>Bamfordvirae</taxon>
        <taxon>Nucleocytoviricota</taxon>
        <taxon>Pokkesviricetes</taxon>
        <taxon>Asfuvirales</taxon>
        <taxon>Asfarviridae</taxon>
        <taxon>Asfivirus</taxon>
        <taxon>African swine fever virus</taxon>
    </lineage>
</organism>
<comment type="function">
    <text evidence="1">Structural protein required for transport of intracellular particles from the assembly sites to the plasma membrane (By similarity). Binds to both ssDNA and dsDNA (By similarity). Suppressed the activation of the cGAS/STING pathway by interfering with the recruitment of IRF3 to TBK1, which in turn suppresses IRF3 phosphorylation, decreasing interferon production (By similarity).</text>
</comment>
<comment type="subunit">
    <text evidence="1">Interacts with the major capsid protein (By similarity). Interacts with host IRF3; this interaction interferes with the recruitment of IRF3 to TBK1 (By similarity).</text>
</comment>
<comment type="subcellular location">
    <subcellularLocation>
        <location evidence="1">Virion</location>
    </subcellularLocation>
    <text evidence="1">Localizes at the surface of the intracellular virion.</text>
</comment>
<comment type="induction">
    <text evidence="1">Expressed in the late phase of the viral replicative cycle.</text>
</comment>
<comment type="PTM">
    <text evidence="1">Acetylated.</text>
</comment>
<comment type="similarity">
    <text evidence="3">Belongs to the asfivirus structural protein p14.5 family.</text>
</comment>
<proteinExistence type="inferred from homology"/>
<reference key="1">
    <citation type="submission" date="2003-03" db="EMBL/GenBank/DDBJ databases">
        <title>African swine fever virus genomes.</title>
        <authorList>
            <person name="Kutish G.F."/>
            <person name="Rock D.L."/>
        </authorList>
    </citation>
    <scope>NUCLEOTIDE SEQUENCE [LARGE SCALE GENOMIC DNA]</scope>
</reference>
<protein>
    <recommendedName>
        <fullName>Protein p14.5</fullName>
    </recommendedName>
    <alternativeName>
        <fullName>pE120R</fullName>
    </alternativeName>
</protein>
<dbReference type="EMBL" id="AY261360">
    <property type="status" value="NOT_ANNOTATED_CDS"/>
    <property type="molecule type" value="Genomic_DNA"/>
</dbReference>
<dbReference type="Proteomes" id="UP000000861">
    <property type="component" value="Segment"/>
</dbReference>
<dbReference type="GO" id="GO:0044423">
    <property type="term" value="C:virion component"/>
    <property type="evidence" value="ECO:0007669"/>
    <property type="project" value="UniProtKB-KW"/>
</dbReference>
<dbReference type="GO" id="GO:0003677">
    <property type="term" value="F:DNA binding"/>
    <property type="evidence" value="ECO:0007669"/>
    <property type="project" value="UniProtKB-KW"/>
</dbReference>
<dbReference type="GO" id="GO:0039548">
    <property type="term" value="P:symbiont-mediated suppression of host cytoplasmic pattern recognition receptor signaling pathway via inhibition of IRF3 activity"/>
    <property type="evidence" value="ECO:0007669"/>
    <property type="project" value="UniProtKB-KW"/>
</dbReference>
<organismHost>
    <name type="scientific">Ornithodoros</name>
    <name type="common">relapsing fever ticks</name>
    <dbReference type="NCBI Taxonomy" id="6937"/>
</organismHost>
<organismHost>
    <name type="scientific">Phacochoerus aethiopicus</name>
    <name type="common">Warthog</name>
    <dbReference type="NCBI Taxonomy" id="85517"/>
</organismHost>
<organismHost>
    <name type="scientific">Phacochoerus africanus</name>
    <name type="common">Warthog</name>
    <dbReference type="NCBI Taxonomy" id="41426"/>
</organismHost>
<organismHost>
    <name type="scientific">Potamochoerus larvatus</name>
    <name type="common">Bushpig</name>
    <dbReference type="NCBI Taxonomy" id="273792"/>
</organismHost>
<organismHost>
    <name type="scientific">Sus scrofa</name>
    <name type="common">Pig</name>
    <dbReference type="NCBI Taxonomy" id="9823"/>
</organismHost>
<feature type="initiator methionine" description="Removed" evidence="3">
    <location>
        <position position="1"/>
    </location>
</feature>
<feature type="chain" id="PRO_0000373397" description="Protein p14.5">
    <location>
        <begin position="2"/>
        <end position="121"/>
    </location>
</feature>
<feature type="region of interest" description="Disordered" evidence="2">
    <location>
        <begin position="84"/>
        <end position="121"/>
    </location>
</feature>
<feature type="compositionally biased region" description="Basic residues" evidence="2">
    <location>
        <begin position="104"/>
        <end position="121"/>
    </location>
</feature>
<feature type="modified residue" description="N-acetylalanine; by host" evidence="1">
    <location>
        <position position="2"/>
    </location>
</feature>
<accession>P0C9Y5</accession>
<gene>
    <name type="ordered locus">Ken-145</name>
</gene>
<keyword id="KW-0007">Acetylation</keyword>
<keyword id="KW-0238">DNA-binding</keyword>
<keyword id="KW-0945">Host-virus interaction</keyword>
<keyword id="KW-1090">Inhibition of host innate immune response by virus</keyword>
<keyword id="KW-1092">Inhibition of host IRF3 by virus</keyword>
<keyword id="KW-1113">Inhibition of host RLR pathway by virus</keyword>
<keyword id="KW-0426">Late protein</keyword>
<keyword id="KW-0899">Viral immunoevasion</keyword>
<keyword id="KW-0946">Virion</keyword>
<name>P14_ASFK5</name>